<reference key="1">
    <citation type="journal article" date="2003" name="Nature">
        <title>Genome sequence of Bacillus cereus and comparative analysis with Bacillus anthracis.</title>
        <authorList>
            <person name="Ivanova N."/>
            <person name="Sorokin A."/>
            <person name="Anderson I."/>
            <person name="Galleron N."/>
            <person name="Candelon B."/>
            <person name="Kapatral V."/>
            <person name="Bhattacharyya A."/>
            <person name="Reznik G."/>
            <person name="Mikhailova N."/>
            <person name="Lapidus A."/>
            <person name="Chu L."/>
            <person name="Mazur M."/>
            <person name="Goltsman E."/>
            <person name="Larsen N."/>
            <person name="D'Souza M."/>
            <person name="Walunas T."/>
            <person name="Grechkin Y."/>
            <person name="Pusch G."/>
            <person name="Haselkorn R."/>
            <person name="Fonstein M."/>
            <person name="Ehrlich S.D."/>
            <person name="Overbeek R."/>
            <person name="Kyrpides N.C."/>
        </authorList>
    </citation>
    <scope>NUCLEOTIDE SEQUENCE [LARGE SCALE GENOMIC DNA]</scope>
    <source>
        <strain>ATCC 14579 / DSM 31 / CCUG 7414 / JCM 2152 / NBRC 15305 / NCIMB 9373 / NCTC 2599 / NRRL B-3711</strain>
    </source>
</reference>
<accession>Q812Y4</accession>
<feature type="chain" id="PRO_0000163870" description="tRNA dimethylallyltransferase">
    <location>
        <begin position="1"/>
        <end position="317"/>
    </location>
</feature>
<feature type="region of interest" description="Interaction with substrate tRNA" evidence="1">
    <location>
        <begin position="39"/>
        <end position="42"/>
    </location>
</feature>
<feature type="binding site" evidence="1">
    <location>
        <begin position="14"/>
        <end position="21"/>
    </location>
    <ligand>
        <name>ATP</name>
        <dbReference type="ChEBI" id="CHEBI:30616"/>
    </ligand>
</feature>
<feature type="binding site" evidence="1">
    <location>
        <begin position="16"/>
        <end position="21"/>
    </location>
    <ligand>
        <name>substrate</name>
    </ligand>
</feature>
<feature type="site" description="Interaction with substrate tRNA" evidence="1">
    <location>
        <position position="105"/>
    </location>
</feature>
<feature type="site" description="Interaction with substrate tRNA" evidence="1">
    <location>
        <position position="128"/>
    </location>
</feature>
<name>MIAA_BACCR</name>
<organism>
    <name type="scientific">Bacillus cereus (strain ATCC 14579 / DSM 31 / CCUG 7414 / JCM 2152 / NBRC 15305 / NCIMB 9373 / NCTC 2599 / NRRL B-3711)</name>
    <dbReference type="NCBI Taxonomy" id="226900"/>
    <lineage>
        <taxon>Bacteria</taxon>
        <taxon>Bacillati</taxon>
        <taxon>Bacillota</taxon>
        <taxon>Bacilli</taxon>
        <taxon>Bacillales</taxon>
        <taxon>Bacillaceae</taxon>
        <taxon>Bacillus</taxon>
        <taxon>Bacillus cereus group</taxon>
    </lineage>
</organism>
<keyword id="KW-0067">ATP-binding</keyword>
<keyword id="KW-0460">Magnesium</keyword>
<keyword id="KW-0547">Nucleotide-binding</keyword>
<keyword id="KW-1185">Reference proteome</keyword>
<keyword id="KW-0808">Transferase</keyword>
<keyword id="KW-0819">tRNA processing</keyword>
<dbReference type="EC" id="2.5.1.75" evidence="1"/>
<dbReference type="EMBL" id="AE016877">
    <property type="protein sequence ID" value="AAP10641.1"/>
    <property type="molecule type" value="Genomic_DNA"/>
</dbReference>
<dbReference type="RefSeq" id="NP_833440.1">
    <property type="nucleotide sequence ID" value="NC_004722.1"/>
</dbReference>
<dbReference type="RefSeq" id="WP_000504930.1">
    <property type="nucleotide sequence ID" value="NC_004722.1"/>
</dbReference>
<dbReference type="SMR" id="Q812Y4"/>
<dbReference type="STRING" id="226900.BC_3714"/>
<dbReference type="KEGG" id="bce:BC3714"/>
<dbReference type="PATRIC" id="fig|226900.8.peg.3826"/>
<dbReference type="HOGENOM" id="CLU_032616_0_1_9"/>
<dbReference type="Proteomes" id="UP000001417">
    <property type="component" value="Chromosome"/>
</dbReference>
<dbReference type="GO" id="GO:0005524">
    <property type="term" value="F:ATP binding"/>
    <property type="evidence" value="ECO:0007669"/>
    <property type="project" value="UniProtKB-UniRule"/>
</dbReference>
<dbReference type="GO" id="GO:0052381">
    <property type="term" value="F:tRNA dimethylallyltransferase activity"/>
    <property type="evidence" value="ECO:0000318"/>
    <property type="project" value="GO_Central"/>
</dbReference>
<dbReference type="GO" id="GO:0006400">
    <property type="term" value="P:tRNA modification"/>
    <property type="evidence" value="ECO:0000318"/>
    <property type="project" value="GO_Central"/>
</dbReference>
<dbReference type="FunFam" id="1.10.20.140:FF:000001">
    <property type="entry name" value="tRNA dimethylallyltransferase"/>
    <property type="match status" value="1"/>
</dbReference>
<dbReference type="Gene3D" id="1.10.20.140">
    <property type="match status" value="1"/>
</dbReference>
<dbReference type="Gene3D" id="3.40.50.300">
    <property type="entry name" value="P-loop containing nucleotide triphosphate hydrolases"/>
    <property type="match status" value="1"/>
</dbReference>
<dbReference type="HAMAP" id="MF_00185">
    <property type="entry name" value="IPP_trans"/>
    <property type="match status" value="1"/>
</dbReference>
<dbReference type="InterPro" id="IPR039657">
    <property type="entry name" value="Dimethylallyltransferase"/>
</dbReference>
<dbReference type="InterPro" id="IPR018022">
    <property type="entry name" value="IPT"/>
</dbReference>
<dbReference type="InterPro" id="IPR027417">
    <property type="entry name" value="P-loop_NTPase"/>
</dbReference>
<dbReference type="NCBIfam" id="TIGR00174">
    <property type="entry name" value="miaA"/>
    <property type="match status" value="1"/>
</dbReference>
<dbReference type="PANTHER" id="PTHR11088">
    <property type="entry name" value="TRNA DIMETHYLALLYLTRANSFERASE"/>
    <property type="match status" value="1"/>
</dbReference>
<dbReference type="PANTHER" id="PTHR11088:SF60">
    <property type="entry name" value="TRNA DIMETHYLALLYLTRANSFERASE"/>
    <property type="match status" value="1"/>
</dbReference>
<dbReference type="Pfam" id="PF01715">
    <property type="entry name" value="IPPT"/>
    <property type="match status" value="1"/>
</dbReference>
<dbReference type="SUPFAM" id="SSF52540">
    <property type="entry name" value="P-loop containing nucleoside triphosphate hydrolases"/>
    <property type="match status" value="1"/>
</dbReference>
<proteinExistence type="inferred from homology"/>
<protein>
    <recommendedName>
        <fullName evidence="1">tRNA dimethylallyltransferase</fullName>
        <ecNumber evidence="1">2.5.1.75</ecNumber>
    </recommendedName>
    <alternativeName>
        <fullName evidence="1">Dimethylallyl diphosphate:tRNA dimethylallyltransferase</fullName>
        <shortName evidence="1">DMAPP:tRNA dimethylallyltransferase</shortName>
        <shortName evidence="1">DMATase</shortName>
    </alternativeName>
    <alternativeName>
        <fullName evidence="1">Isopentenyl-diphosphate:tRNA isopentenyltransferase</fullName>
        <shortName evidence="1">IPP transferase</shortName>
        <shortName evidence="1">IPPT</shortName>
        <shortName evidence="1">IPTase</shortName>
    </alternativeName>
</protein>
<evidence type="ECO:0000255" key="1">
    <source>
        <dbReference type="HAMAP-Rule" id="MF_00185"/>
    </source>
</evidence>
<gene>
    <name evidence="1" type="primary">miaA</name>
    <name type="ordered locus">BC_3714</name>
</gene>
<comment type="function">
    <text evidence="1">Catalyzes the transfer of a dimethylallyl group onto the adenine at position 37 in tRNAs that read codons beginning with uridine, leading to the formation of N6-(dimethylallyl)adenosine (i(6)A).</text>
</comment>
<comment type="catalytic activity">
    <reaction evidence="1">
        <text>adenosine(37) in tRNA + dimethylallyl diphosphate = N(6)-dimethylallyladenosine(37) in tRNA + diphosphate</text>
        <dbReference type="Rhea" id="RHEA:26482"/>
        <dbReference type="Rhea" id="RHEA-COMP:10162"/>
        <dbReference type="Rhea" id="RHEA-COMP:10375"/>
        <dbReference type="ChEBI" id="CHEBI:33019"/>
        <dbReference type="ChEBI" id="CHEBI:57623"/>
        <dbReference type="ChEBI" id="CHEBI:74411"/>
        <dbReference type="ChEBI" id="CHEBI:74415"/>
        <dbReference type="EC" id="2.5.1.75"/>
    </reaction>
</comment>
<comment type="cofactor">
    <cofactor evidence="1">
        <name>Mg(2+)</name>
        <dbReference type="ChEBI" id="CHEBI:18420"/>
    </cofactor>
</comment>
<comment type="subunit">
    <text evidence="1">Monomer.</text>
</comment>
<comment type="similarity">
    <text evidence="1">Belongs to the IPP transferase family.</text>
</comment>
<sequence length="317" mass="36647">MGEVQREKVAVIIGPTAVGKTKLSIDLAKALNGEIISGDSMQIYRTMDIGTAKVTKAEMDGIPHYMIDIKNPEDSFSVAEFQERVRKHIREITERGKLPIIVGGTGLYIQSVLFDYQFTDDAGDVIYREQREKLALERGVEYVHEKLQEVDPESAERIHANNVRRVIRALEIFHTTGEKMSEQIEKQEKELLYDVSLIGLTMDREMLYDRINLRVDLMMEQGLLEEVEGLYNRGIRDCQSIQAIGYKEIYDYFENRASLEDAVSQLKTNSRRYAKRQLTWFRNKMDVTWFDVTDGEKTSEILRYIEGKLQVKSNNSK</sequence>